<reference key="1">
    <citation type="journal article" date="1971" name="J. Biochem.">
        <title>Studies on protamines. XV. The complete amino acid sequence of the Z component of clupeine. Application of N leads to O acyl rearrangement and selective hydrolysis in sequence determination.</title>
        <authorList>
            <person name="Iwai K."/>
            <person name="Nakahara C."/>
            <person name="Ando T."/>
        </authorList>
    </citation>
    <scope>PROTEIN SEQUENCE</scope>
</reference>
<protein>
    <recommendedName>
        <fullName>Protamine-Z</fullName>
    </recommendedName>
    <alternativeName>
        <fullName>Clupeine-Z</fullName>
    </alternativeName>
</protein>
<sequence length="31" mass="4165">ARRRRSRRASRPVRRRRPRRVSRRRRARRRR</sequence>
<organism>
    <name type="scientific">Clupea pallasii</name>
    <name type="common">Pacific herring</name>
    <dbReference type="NCBI Taxonomy" id="30724"/>
    <lineage>
        <taxon>Eukaryota</taxon>
        <taxon>Metazoa</taxon>
        <taxon>Chordata</taxon>
        <taxon>Craniata</taxon>
        <taxon>Vertebrata</taxon>
        <taxon>Euteleostomi</taxon>
        <taxon>Actinopterygii</taxon>
        <taxon>Neopterygii</taxon>
        <taxon>Teleostei</taxon>
        <taxon>Clupei</taxon>
        <taxon>Clupeiformes</taxon>
        <taxon>Clupeoidei</taxon>
        <taxon>Clupeidae</taxon>
        <taxon>Clupea</taxon>
    </lineage>
</organism>
<accession>P69011</accession>
<accession>P02336</accession>
<comment type="function">
    <text>Protamines substitute for histones in the chromatin of sperm during the haploid phase of spermatogenesis. They compact sperm DNA into a highly condensed, stable and inactive complex.</text>
</comment>
<comment type="subcellular location">
    <subcellularLocation>
        <location>Nucleus</location>
    </subcellularLocation>
    <subcellularLocation>
        <location>Chromosome</location>
    </subcellularLocation>
</comment>
<comment type="tissue specificity">
    <text>Testis.</text>
</comment>
<comment type="miscellaneous">
    <text>Clupeine Z is probably the result of a crossover between the genes for clupeines YI and YII.</text>
</comment>
<proteinExistence type="evidence at protein level"/>
<dbReference type="PIR" id="A38053">
    <property type="entry name" value="CLHRZ"/>
</dbReference>
<dbReference type="IntAct" id="P69011">
    <property type="interactions" value="1"/>
</dbReference>
<dbReference type="MINT" id="P69011"/>
<dbReference type="iPTMnet" id="P69011"/>
<dbReference type="GO" id="GO:0000786">
    <property type="term" value="C:nucleosome"/>
    <property type="evidence" value="ECO:0007669"/>
    <property type="project" value="UniProtKB-KW"/>
</dbReference>
<dbReference type="GO" id="GO:0005634">
    <property type="term" value="C:nucleus"/>
    <property type="evidence" value="ECO:0007669"/>
    <property type="project" value="UniProtKB-SubCell"/>
</dbReference>
<dbReference type="GO" id="GO:0003677">
    <property type="term" value="F:DNA binding"/>
    <property type="evidence" value="ECO:0007669"/>
    <property type="project" value="UniProtKB-KW"/>
</dbReference>
<dbReference type="GO" id="GO:0030154">
    <property type="term" value="P:cell differentiation"/>
    <property type="evidence" value="ECO:0007669"/>
    <property type="project" value="UniProtKB-KW"/>
</dbReference>
<dbReference type="GO" id="GO:0030261">
    <property type="term" value="P:chromosome condensation"/>
    <property type="evidence" value="ECO:0007669"/>
    <property type="project" value="UniProtKB-KW"/>
</dbReference>
<dbReference type="GO" id="GO:0007283">
    <property type="term" value="P:spermatogenesis"/>
    <property type="evidence" value="ECO:0007669"/>
    <property type="project" value="UniProtKB-KW"/>
</dbReference>
<name>PRTZ_CLUPA</name>
<evidence type="ECO:0000256" key="1">
    <source>
        <dbReference type="SAM" id="MobiDB-lite"/>
    </source>
</evidence>
<feature type="peptide" id="PRO_0000044828" description="Protamine-Z">
    <location>
        <begin position="1"/>
        <end position="31"/>
    </location>
</feature>
<feature type="region of interest" description="Disordered" evidence="1">
    <location>
        <begin position="1"/>
        <end position="31"/>
    </location>
</feature>
<keyword id="KW-0158">Chromosome</keyword>
<keyword id="KW-0217">Developmental protein</keyword>
<keyword id="KW-0221">Differentiation</keyword>
<keyword id="KW-0903">Direct protein sequencing</keyword>
<keyword id="KW-0226">DNA condensation</keyword>
<keyword id="KW-0238">DNA-binding</keyword>
<keyword id="KW-0544">Nucleosome core</keyword>
<keyword id="KW-0539">Nucleus</keyword>
<keyword id="KW-0744">Spermatogenesis</keyword>